<protein>
    <recommendedName>
        <fullName>GDP-mannose pyrophosphatase</fullName>
        <ecNumber evidence="1">3.6.1.-</ecNumber>
    </recommendedName>
    <alternativeName>
        <fullName>GDP-mannose hydrolase</fullName>
    </alternativeName>
    <alternativeName>
        <fullName>GDPMK</fullName>
    </alternativeName>
</protein>
<name>NUDK_YERPE</name>
<sequence length="198" mass="22472">MSVKIENIQCELLSKNWFKLHKYTFDLKTDEGTSVQQIREVYDRGNGATILLYNRQQGTVVLIEQFRMPTYVNGNASGMLLEACAGLLDNDSPEACIRREAMEETGYQVDKVQKLFEAYMSPGGVTELVYFFAAEYHPDQKITDEVGVEDEVIEVVELPFHDALAMVADGRIKDGKTIMLLQYAQIHFFPSSLTPQRC</sequence>
<reference key="1">
    <citation type="journal article" date="2001" name="Nature">
        <title>Genome sequence of Yersinia pestis, the causative agent of plague.</title>
        <authorList>
            <person name="Parkhill J."/>
            <person name="Wren B.W."/>
            <person name="Thomson N.R."/>
            <person name="Titball R.W."/>
            <person name="Holden M.T.G."/>
            <person name="Prentice M.B."/>
            <person name="Sebaihia M."/>
            <person name="James K.D."/>
            <person name="Churcher C.M."/>
            <person name="Mungall K.L."/>
            <person name="Baker S."/>
            <person name="Basham D."/>
            <person name="Bentley S.D."/>
            <person name="Brooks K."/>
            <person name="Cerdeno-Tarraga A.-M."/>
            <person name="Chillingworth T."/>
            <person name="Cronin A."/>
            <person name="Davies R.M."/>
            <person name="Davis P."/>
            <person name="Dougan G."/>
            <person name="Feltwell T."/>
            <person name="Hamlin N."/>
            <person name="Holroyd S."/>
            <person name="Jagels K."/>
            <person name="Karlyshev A.V."/>
            <person name="Leather S."/>
            <person name="Moule S."/>
            <person name="Oyston P.C.F."/>
            <person name="Quail M.A."/>
            <person name="Rutherford K.M."/>
            <person name="Simmonds M."/>
            <person name="Skelton J."/>
            <person name="Stevens K."/>
            <person name="Whitehead S."/>
            <person name="Barrell B.G."/>
        </authorList>
    </citation>
    <scope>NUCLEOTIDE SEQUENCE [LARGE SCALE GENOMIC DNA]</scope>
    <source>
        <strain>CO-92 / Biovar Orientalis</strain>
    </source>
</reference>
<reference key="2">
    <citation type="journal article" date="2002" name="J. Bacteriol.">
        <title>Genome sequence of Yersinia pestis KIM.</title>
        <authorList>
            <person name="Deng W."/>
            <person name="Burland V."/>
            <person name="Plunkett G. III"/>
            <person name="Boutin A."/>
            <person name="Mayhew G.F."/>
            <person name="Liss P."/>
            <person name="Perna N.T."/>
            <person name="Rose D.J."/>
            <person name="Mau B."/>
            <person name="Zhou S."/>
            <person name="Schwartz D.C."/>
            <person name="Fetherston J.D."/>
            <person name="Lindler L.E."/>
            <person name="Brubaker R.R."/>
            <person name="Plano G.V."/>
            <person name="Straley S.C."/>
            <person name="McDonough K.A."/>
            <person name="Nilles M.L."/>
            <person name="Matson J.S."/>
            <person name="Blattner F.R."/>
            <person name="Perry R.D."/>
        </authorList>
    </citation>
    <scope>NUCLEOTIDE SEQUENCE [LARGE SCALE GENOMIC DNA]</scope>
    <source>
        <strain>KIM10+ / Biovar Mediaevalis</strain>
    </source>
</reference>
<reference key="3">
    <citation type="journal article" date="2004" name="DNA Res.">
        <title>Complete genome sequence of Yersinia pestis strain 91001, an isolate avirulent to humans.</title>
        <authorList>
            <person name="Song Y."/>
            <person name="Tong Z."/>
            <person name="Wang J."/>
            <person name="Wang L."/>
            <person name="Guo Z."/>
            <person name="Han Y."/>
            <person name="Zhang J."/>
            <person name="Pei D."/>
            <person name="Zhou D."/>
            <person name="Qin H."/>
            <person name="Pang X."/>
            <person name="Han Y."/>
            <person name="Zhai J."/>
            <person name="Li M."/>
            <person name="Cui B."/>
            <person name="Qi Z."/>
            <person name="Jin L."/>
            <person name="Dai R."/>
            <person name="Chen F."/>
            <person name="Li S."/>
            <person name="Ye C."/>
            <person name="Du Z."/>
            <person name="Lin W."/>
            <person name="Wang J."/>
            <person name="Yu J."/>
            <person name="Yang H."/>
            <person name="Wang J."/>
            <person name="Huang P."/>
            <person name="Yang R."/>
        </authorList>
    </citation>
    <scope>NUCLEOTIDE SEQUENCE [LARGE SCALE GENOMIC DNA]</scope>
    <source>
        <strain>91001 / Biovar Mediaevalis</strain>
    </source>
</reference>
<gene>
    <name type="primary">nudK</name>
    <name type="ordered locus">YPO3035</name>
    <name type="ordered locus">y1448</name>
    <name type="ordered locus">YP_2658</name>
</gene>
<evidence type="ECO:0000250" key="1">
    <source>
        <dbReference type="UniProtKB" id="P37128"/>
    </source>
</evidence>
<evidence type="ECO:0000255" key="2">
    <source>
        <dbReference type="PROSITE-ProRule" id="PRU00794"/>
    </source>
</evidence>
<evidence type="ECO:0000305" key="3"/>
<feature type="chain" id="PRO_0000342506" description="GDP-mannose pyrophosphatase">
    <location>
        <begin position="1"/>
        <end position="198"/>
    </location>
</feature>
<feature type="domain" description="Nudix hydrolase" evidence="2">
    <location>
        <begin position="43"/>
        <end position="180"/>
    </location>
</feature>
<feature type="short sequence motif" description="Nudix box">
    <location>
        <begin position="86"/>
        <end position="106"/>
    </location>
</feature>
<feature type="binding site" evidence="1">
    <location>
        <begin position="38"/>
        <end position="40"/>
    </location>
    <ligand>
        <name>GDP-alpha-D-mannose</name>
        <dbReference type="ChEBI" id="CHEBI:57527"/>
        <note>ligand shared between dimeric partners</note>
    </ligand>
</feature>
<feature type="binding site" description="in other chain" evidence="1">
    <location>
        <position position="67"/>
    </location>
    <ligand>
        <name>GDP-alpha-D-mannose</name>
        <dbReference type="ChEBI" id="CHEBI:57527"/>
        <note>ligand shared between dimeric partners</note>
    </ligand>
</feature>
<feature type="binding site" description="in other chain" evidence="1">
    <location>
        <begin position="85"/>
        <end position="87"/>
    </location>
    <ligand>
        <name>GDP-alpha-D-mannose</name>
        <dbReference type="ChEBI" id="CHEBI:57527"/>
        <note>ligand shared between dimeric partners</note>
    </ligand>
</feature>
<feature type="binding site" evidence="1">
    <location>
        <position position="85"/>
    </location>
    <ligand>
        <name>Mg(2+)</name>
        <dbReference type="ChEBI" id="CHEBI:18420"/>
        <label>1</label>
    </ligand>
</feature>
<feature type="binding site" evidence="1">
    <location>
        <position position="100"/>
    </location>
    <ligand>
        <name>Mg(2+)</name>
        <dbReference type="ChEBI" id="CHEBI:18420"/>
        <label>2</label>
    </ligand>
</feature>
<feature type="binding site" description="in other chain" evidence="1">
    <location>
        <position position="104"/>
    </location>
    <ligand>
        <name>GDP-alpha-D-mannose</name>
        <dbReference type="ChEBI" id="CHEBI:57527"/>
        <note>ligand shared between dimeric partners</note>
    </ligand>
</feature>
<feature type="binding site" evidence="1">
    <location>
        <position position="104"/>
    </location>
    <ligand>
        <name>Mg(2+)</name>
        <dbReference type="ChEBI" id="CHEBI:18420"/>
        <label>1</label>
    </ligand>
</feature>
<feature type="binding site" evidence="1">
    <location>
        <position position="104"/>
    </location>
    <ligand>
        <name>Mg(2+)</name>
        <dbReference type="ChEBI" id="CHEBI:18420"/>
        <label>2</label>
    </ligand>
</feature>
<feature type="binding site" description="in other chain" evidence="1">
    <location>
        <position position="127"/>
    </location>
    <ligand>
        <name>GDP-alpha-D-mannose</name>
        <dbReference type="ChEBI" id="CHEBI:57527"/>
        <note>ligand shared between dimeric partners</note>
    </ligand>
</feature>
<feature type="binding site" description="in other chain" evidence="1">
    <location>
        <begin position="150"/>
        <end position="151"/>
    </location>
    <ligand>
        <name>GDP-alpha-D-mannose</name>
        <dbReference type="ChEBI" id="CHEBI:57527"/>
        <note>ligand shared between dimeric partners</note>
    </ligand>
</feature>
<feature type="binding site" evidence="1">
    <location>
        <position position="151"/>
    </location>
    <ligand>
        <name>Mg(2+)</name>
        <dbReference type="ChEBI" id="CHEBI:18420"/>
        <label>2</label>
    </ligand>
</feature>
<feature type="binding site" description="in other chain" evidence="1">
    <location>
        <position position="176"/>
    </location>
    <ligand>
        <name>GDP-alpha-D-mannose</name>
        <dbReference type="ChEBI" id="CHEBI:57527"/>
        <note>ligand shared between dimeric partners</note>
    </ligand>
</feature>
<comment type="function">
    <text evidence="1">Nucleoside diphosphate sugar hydrolase that hydrolyzes GDP-mannose as its preferred substrate, yielding GMP and mannose-1-phosphate.</text>
</comment>
<comment type="catalytic activity">
    <reaction evidence="1">
        <text>GDP-alpha-D-mannose + H2O = alpha-D-mannose 1-phosphate + GMP + 2 H(+)</text>
        <dbReference type="Rhea" id="RHEA:27978"/>
        <dbReference type="ChEBI" id="CHEBI:15377"/>
        <dbReference type="ChEBI" id="CHEBI:15378"/>
        <dbReference type="ChEBI" id="CHEBI:57527"/>
        <dbReference type="ChEBI" id="CHEBI:58115"/>
        <dbReference type="ChEBI" id="CHEBI:58409"/>
    </reaction>
</comment>
<comment type="cofactor">
    <cofactor evidence="1">
        <name>Mg(2+)</name>
        <dbReference type="ChEBI" id="CHEBI:18420"/>
    </cofactor>
</comment>
<comment type="subunit">
    <text evidence="1">Homodimer.</text>
</comment>
<comment type="domain">
    <text evidence="1">In the dimer, the N-terminal domains are swapped between the two monomers, such that residues of both chains contribute to the active site.</text>
</comment>
<comment type="similarity">
    <text evidence="3">Belongs to the Nudix hydrolase family. NudK subfamily.</text>
</comment>
<comment type="sequence caution" evidence="3">
    <conflict type="erroneous initiation">
        <sequence resource="EMBL-CDS" id="AAM85019"/>
    </conflict>
</comment>
<dbReference type="EC" id="3.6.1.-" evidence="1"/>
<dbReference type="EMBL" id="AL590842">
    <property type="protein sequence ID" value="CAL21637.1"/>
    <property type="molecule type" value="Genomic_DNA"/>
</dbReference>
<dbReference type="EMBL" id="AE009952">
    <property type="protein sequence ID" value="AAM85019.1"/>
    <property type="status" value="ALT_INIT"/>
    <property type="molecule type" value="Genomic_DNA"/>
</dbReference>
<dbReference type="EMBL" id="AE017042">
    <property type="protein sequence ID" value="AAS62850.1"/>
    <property type="molecule type" value="Genomic_DNA"/>
</dbReference>
<dbReference type="PIR" id="AB0369">
    <property type="entry name" value="AB0369"/>
</dbReference>
<dbReference type="RefSeq" id="WP_002208529.1">
    <property type="nucleotide sequence ID" value="NZ_WUCM01000010.1"/>
</dbReference>
<dbReference type="RefSeq" id="YP_002347955.1">
    <property type="nucleotide sequence ID" value="NC_003143.1"/>
</dbReference>
<dbReference type="SMR" id="Q74SF4"/>
<dbReference type="STRING" id="214092.YPO3035"/>
<dbReference type="PaxDb" id="214092-YPO3035"/>
<dbReference type="DNASU" id="1146395"/>
<dbReference type="EnsemblBacteria" id="AAS62850">
    <property type="protein sequence ID" value="AAS62850"/>
    <property type="gene ID" value="YP_2658"/>
</dbReference>
<dbReference type="GeneID" id="57975667"/>
<dbReference type="KEGG" id="ype:YPO3035"/>
<dbReference type="KEGG" id="ypk:y1448"/>
<dbReference type="KEGG" id="ypm:YP_2658"/>
<dbReference type="PATRIC" id="fig|1028802.3.peg.954"/>
<dbReference type="eggNOG" id="COG0494">
    <property type="taxonomic scope" value="Bacteria"/>
</dbReference>
<dbReference type="HOGENOM" id="CLU_062658_6_0_6"/>
<dbReference type="OMA" id="EQCIRNE"/>
<dbReference type="OrthoDB" id="5292471at2"/>
<dbReference type="Proteomes" id="UP000000815">
    <property type="component" value="Chromosome"/>
</dbReference>
<dbReference type="Proteomes" id="UP000001019">
    <property type="component" value="Chromosome"/>
</dbReference>
<dbReference type="Proteomes" id="UP000002490">
    <property type="component" value="Chromosome"/>
</dbReference>
<dbReference type="GO" id="GO:0005829">
    <property type="term" value="C:cytosol"/>
    <property type="evidence" value="ECO:0000318"/>
    <property type="project" value="GO_Central"/>
</dbReference>
<dbReference type="GO" id="GO:0016818">
    <property type="term" value="F:hydrolase activity, acting on acid anhydrides, in phosphorus-containing anhydrides"/>
    <property type="evidence" value="ECO:0007669"/>
    <property type="project" value="InterPro"/>
</dbReference>
<dbReference type="GO" id="GO:0046872">
    <property type="term" value="F:metal ion binding"/>
    <property type="evidence" value="ECO:0007669"/>
    <property type="project" value="UniProtKB-KW"/>
</dbReference>
<dbReference type="GO" id="GO:0006753">
    <property type="term" value="P:nucleoside phosphate metabolic process"/>
    <property type="evidence" value="ECO:0000318"/>
    <property type="project" value="GO_Central"/>
</dbReference>
<dbReference type="GO" id="GO:0019693">
    <property type="term" value="P:ribose phosphate metabolic process"/>
    <property type="evidence" value="ECO:0000318"/>
    <property type="project" value="GO_Central"/>
</dbReference>
<dbReference type="CDD" id="cd24157">
    <property type="entry name" value="NUDIX_GDPMK"/>
    <property type="match status" value="1"/>
</dbReference>
<dbReference type="FunFam" id="3.90.79.10:FF:000010">
    <property type="entry name" value="GDP-mannose pyrophosphatase NudK"/>
    <property type="match status" value="1"/>
</dbReference>
<dbReference type="Gene3D" id="3.90.79.10">
    <property type="entry name" value="Nucleoside Triphosphate Pyrophosphohydrolase"/>
    <property type="match status" value="1"/>
</dbReference>
<dbReference type="InterPro" id="IPR004385">
    <property type="entry name" value="NDP_pyrophosphatase"/>
</dbReference>
<dbReference type="InterPro" id="IPR015797">
    <property type="entry name" value="NUDIX_hydrolase-like_dom_sf"/>
</dbReference>
<dbReference type="InterPro" id="IPR000086">
    <property type="entry name" value="NUDIX_hydrolase_dom"/>
</dbReference>
<dbReference type="NCBIfam" id="TIGR00052">
    <property type="entry name" value="nudix-type nucleoside diphosphatase, YffH/AdpP family"/>
    <property type="match status" value="1"/>
</dbReference>
<dbReference type="NCBIfam" id="NF011585">
    <property type="entry name" value="PRK15009.1"/>
    <property type="match status" value="1"/>
</dbReference>
<dbReference type="PANTHER" id="PTHR11839:SF18">
    <property type="entry name" value="NUDIX HYDROLASE DOMAIN-CONTAINING PROTEIN"/>
    <property type="match status" value="1"/>
</dbReference>
<dbReference type="PANTHER" id="PTHR11839">
    <property type="entry name" value="UDP/ADP-SUGAR PYROPHOSPHATASE"/>
    <property type="match status" value="1"/>
</dbReference>
<dbReference type="Pfam" id="PF00293">
    <property type="entry name" value="NUDIX"/>
    <property type="match status" value="1"/>
</dbReference>
<dbReference type="SUPFAM" id="SSF55811">
    <property type="entry name" value="Nudix"/>
    <property type="match status" value="1"/>
</dbReference>
<dbReference type="PROSITE" id="PS51462">
    <property type="entry name" value="NUDIX"/>
    <property type="match status" value="1"/>
</dbReference>
<organism>
    <name type="scientific">Yersinia pestis</name>
    <dbReference type="NCBI Taxonomy" id="632"/>
    <lineage>
        <taxon>Bacteria</taxon>
        <taxon>Pseudomonadati</taxon>
        <taxon>Pseudomonadota</taxon>
        <taxon>Gammaproteobacteria</taxon>
        <taxon>Enterobacterales</taxon>
        <taxon>Yersiniaceae</taxon>
        <taxon>Yersinia</taxon>
    </lineage>
</organism>
<accession>Q74SF4</accession>
<accession>Q8D0X4</accession>
<keyword id="KW-0378">Hydrolase</keyword>
<keyword id="KW-0460">Magnesium</keyword>
<keyword id="KW-0479">Metal-binding</keyword>
<keyword id="KW-1185">Reference proteome</keyword>
<proteinExistence type="inferred from homology"/>